<gene>
    <name type="primary">opgG</name>
    <name type="ordered locus">RHOS4_17320</name>
    <name type="ORF">RSP_0125</name>
</gene>
<protein>
    <recommendedName>
        <fullName>Glucans biosynthesis protein G</fullName>
    </recommendedName>
</protein>
<dbReference type="EMBL" id="AF016298">
    <property type="protein sequence ID" value="AAG09638.1"/>
    <property type="molecule type" value="Genomic_DNA"/>
</dbReference>
<dbReference type="EMBL" id="CP000143">
    <property type="protein sequence ID" value="ABA79300.2"/>
    <property type="status" value="ALT_INIT"/>
    <property type="molecule type" value="Genomic_DNA"/>
</dbReference>
<dbReference type="RefSeq" id="WP_009563902.1">
    <property type="nucleotide sequence ID" value="NZ_CP030271.1"/>
</dbReference>
<dbReference type="RefSeq" id="YP_353201.2">
    <property type="nucleotide sequence ID" value="NC_007493.2"/>
</dbReference>
<dbReference type="SMR" id="Q9FA54"/>
<dbReference type="STRING" id="272943.RSP_0125"/>
<dbReference type="MetOSite" id="Q9FA54"/>
<dbReference type="EnsemblBacteria" id="ABA79300">
    <property type="protein sequence ID" value="ABA79300"/>
    <property type="gene ID" value="RSP_0125"/>
</dbReference>
<dbReference type="GeneID" id="3719692"/>
<dbReference type="KEGG" id="rsp:RSP_0125"/>
<dbReference type="PATRIC" id="fig|272943.9.peg.2066"/>
<dbReference type="eggNOG" id="COG3131">
    <property type="taxonomic scope" value="Bacteria"/>
</dbReference>
<dbReference type="OrthoDB" id="9777817at2"/>
<dbReference type="PhylomeDB" id="Q9FA54"/>
<dbReference type="UniPathway" id="UPA00637"/>
<dbReference type="Proteomes" id="UP000002703">
    <property type="component" value="Chromosome 1"/>
</dbReference>
<dbReference type="GO" id="GO:0030288">
    <property type="term" value="C:outer membrane-bounded periplasmic space"/>
    <property type="evidence" value="ECO:0007669"/>
    <property type="project" value="TreeGrafter"/>
</dbReference>
<dbReference type="GO" id="GO:0030246">
    <property type="term" value="F:carbohydrate binding"/>
    <property type="evidence" value="ECO:0007669"/>
    <property type="project" value="InterPro"/>
</dbReference>
<dbReference type="GO" id="GO:0003824">
    <property type="term" value="F:catalytic activity"/>
    <property type="evidence" value="ECO:0007669"/>
    <property type="project" value="InterPro"/>
</dbReference>
<dbReference type="GO" id="GO:0051274">
    <property type="term" value="P:beta-glucan biosynthetic process"/>
    <property type="evidence" value="ECO:0007669"/>
    <property type="project" value="TreeGrafter"/>
</dbReference>
<dbReference type="FunFam" id="2.70.98.10:FF:000001">
    <property type="entry name" value="Glucans biosynthesis protein G"/>
    <property type="match status" value="1"/>
</dbReference>
<dbReference type="Gene3D" id="2.70.98.10">
    <property type="match status" value="1"/>
</dbReference>
<dbReference type="Gene3D" id="2.60.40.10">
    <property type="entry name" value="Immunoglobulins"/>
    <property type="match status" value="1"/>
</dbReference>
<dbReference type="HAMAP" id="MF_01069">
    <property type="entry name" value="MdoG_OpgG"/>
    <property type="match status" value="1"/>
</dbReference>
<dbReference type="InterPro" id="IPR011013">
    <property type="entry name" value="Gal_mutarotase_sf_dom"/>
</dbReference>
<dbReference type="InterPro" id="IPR014718">
    <property type="entry name" value="GH-type_carb-bd"/>
</dbReference>
<dbReference type="InterPro" id="IPR014438">
    <property type="entry name" value="Glucan_biosyn_MdoG/MdoD"/>
</dbReference>
<dbReference type="InterPro" id="IPR007444">
    <property type="entry name" value="Glucan_biosyn_MdoG_C"/>
</dbReference>
<dbReference type="InterPro" id="IPR013783">
    <property type="entry name" value="Ig-like_fold"/>
</dbReference>
<dbReference type="InterPro" id="IPR014756">
    <property type="entry name" value="Ig_E-set"/>
</dbReference>
<dbReference type="InterPro" id="IPR023704">
    <property type="entry name" value="MdoG_OpgG"/>
</dbReference>
<dbReference type="InterPro" id="IPR006311">
    <property type="entry name" value="TAT_signal"/>
</dbReference>
<dbReference type="PANTHER" id="PTHR30504">
    <property type="entry name" value="GLUCANS BIOSYNTHESIS PROTEIN"/>
    <property type="match status" value="1"/>
</dbReference>
<dbReference type="PANTHER" id="PTHR30504:SF3">
    <property type="entry name" value="GLUCANS BIOSYNTHESIS PROTEIN D"/>
    <property type="match status" value="1"/>
</dbReference>
<dbReference type="Pfam" id="PF04349">
    <property type="entry name" value="MdoG"/>
    <property type="match status" value="1"/>
</dbReference>
<dbReference type="PIRSF" id="PIRSF006281">
    <property type="entry name" value="MdoG"/>
    <property type="match status" value="1"/>
</dbReference>
<dbReference type="SUPFAM" id="SSF81296">
    <property type="entry name" value="E set domains"/>
    <property type="match status" value="1"/>
</dbReference>
<dbReference type="SUPFAM" id="SSF74650">
    <property type="entry name" value="Galactose mutarotase-like"/>
    <property type="match status" value="1"/>
</dbReference>
<dbReference type="PROSITE" id="PS51318">
    <property type="entry name" value="TAT"/>
    <property type="match status" value="1"/>
</dbReference>
<sequence length="540" mass="59885">MPAPAAPSARLNRRLLLSAASSSLALAASGLMGLPLRAQEAPADAPPASVPVAAPQQFSYDWLTEEMRVAATQPHVEPENLTGFLGELQYDDYRSINFRTDRSRWADTDSMFRIQAFHLGWLFGAPVRLYDVTDGYVHEVRFSTDDFEYRNELSTRVAAHVDLPGVAGFRLNFPLNRPDVFDELVAFLGASYFRALGRGNGYGISARGLAVNTATSAPEEFPRFSRFYLERPHGGGLSAVLYAAMESPSVTGAYRFVITPGIETMIEVTARLFFRSAVTQLGVAPLTSMFLFSEKNRATYDDFRPNVHDSDGLAVRRRDGDILWRPLNNPPRLASSYFGEENPQAFGLHQRKRSFDDYQDAEAHYELRPSVDVEPIGDWGKGMVRLVEIPTRYETNDNIVAFWVPEGQISAGDAREFAYRLRWGALPIEEPSDIAHIWETRAGHGGVSGVENTGETRKFVIDFKGGLLGGLPGDAEVEAITSVQHGQIVTQTLERLDGMDIWRLVLDVAAAEGATVELAAHIAGYGRKLSETWLYQWMKA</sequence>
<name>OPGG_CERS4</name>
<reference key="1">
    <citation type="journal article" date="2002" name="Eur. J. Biochem.">
        <title>The opgGIH and opgC genes of Rhodobacter sphaeroides form an operon that controls backbone synthesis and succinylation of osmoregulated periplasmic glucans.</title>
        <authorList>
            <person name="Cogez V."/>
            <person name="Gak E."/>
            <person name="Puskas A."/>
            <person name="Kaplan S."/>
            <person name="Bohin J.-P."/>
        </authorList>
    </citation>
    <scope>NUCLEOTIDE SEQUENCE [GENOMIC DNA]</scope>
</reference>
<reference key="2">
    <citation type="submission" date="2005-09" db="EMBL/GenBank/DDBJ databases">
        <title>Complete sequence of chromosome 1 of Rhodobacter sphaeroides 2.4.1.</title>
        <authorList>
            <person name="Copeland A."/>
            <person name="Lucas S."/>
            <person name="Lapidus A."/>
            <person name="Barry K."/>
            <person name="Detter J.C."/>
            <person name="Glavina T."/>
            <person name="Hammon N."/>
            <person name="Israni S."/>
            <person name="Pitluck S."/>
            <person name="Richardson P."/>
            <person name="Mackenzie C."/>
            <person name="Choudhary M."/>
            <person name="Larimer F."/>
            <person name="Hauser L.J."/>
            <person name="Land M."/>
            <person name="Donohue T.J."/>
            <person name="Kaplan S."/>
        </authorList>
    </citation>
    <scope>NUCLEOTIDE SEQUENCE [LARGE SCALE GENOMIC DNA]</scope>
    <source>
        <strain>ATCC 17023 / DSM 158 / JCM 6121 / CCUG 31486 / LMG 2827 / NBRC 12203 / NCIMB 8253 / ATH 2.4.1.</strain>
    </source>
</reference>
<proteinExistence type="inferred from homology"/>
<accession>Q9FA54</accession>
<accession>Q3J1N4</accession>
<feature type="signal peptide" evidence="2">
    <location>
        <begin position="1"/>
        <end position="38"/>
    </location>
</feature>
<feature type="chain" id="PRO_0000020231" description="Glucans biosynthesis protein G">
    <location>
        <begin position="39"/>
        <end position="540"/>
    </location>
</feature>
<keyword id="KW-0574">Periplasm</keyword>
<keyword id="KW-1185">Reference proteome</keyword>
<keyword id="KW-0732">Signal</keyword>
<organism>
    <name type="scientific">Cereibacter sphaeroides (strain ATCC 17023 / DSM 158 / JCM 6121 / CCUG 31486 / LMG 2827 / NBRC 12203 / NCIMB 8253 / ATH 2.4.1.)</name>
    <name type="common">Rhodobacter sphaeroides</name>
    <dbReference type="NCBI Taxonomy" id="272943"/>
    <lineage>
        <taxon>Bacteria</taxon>
        <taxon>Pseudomonadati</taxon>
        <taxon>Pseudomonadota</taxon>
        <taxon>Alphaproteobacteria</taxon>
        <taxon>Rhodobacterales</taxon>
        <taxon>Paracoccaceae</taxon>
        <taxon>Cereibacter</taxon>
    </lineage>
</organism>
<comment type="function">
    <text>Involved in the biosynthesis of osmoregulated periplasmic glucans (OPGs).</text>
</comment>
<comment type="pathway">
    <text>Glycan metabolism; osmoregulated periplasmic glucan (OPG) biosynthesis.</text>
</comment>
<comment type="subcellular location">
    <subcellularLocation>
        <location evidence="1">Periplasm</location>
    </subcellularLocation>
</comment>
<comment type="similarity">
    <text evidence="3">Belongs to the OpgD/OpgG family.</text>
</comment>
<comment type="sequence caution" evidence="3">
    <conflict type="erroneous initiation">
        <sequence resource="EMBL-CDS" id="ABA79300"/>
    </conflict>
    <text>Truncated N-terminus.</text>
</comment>
<evidence type="ECO:0000250" key="1"/>
<evidence type="ECO:0000255" key="2"/>
<evidence type="ECO:0000305" key="3"/>